<organism>
    <name type="scientific">Bacillus phage phi29</name>
    <name type="common">Bacteriophage phi-29</name>
    <dbReference type="NCBI Taxonomy" id="2884424"/>
    <lineage>
        <taxon>Viruses</taxon>
        <taxon>Duplodnaviria</taxon>
        <taxon>Heunggongvirae</taxon>
        <taxon>Uroviricota</taxon>
        <taxon>Caudoviricetes</taxon>
        <taxon>Salasmaviridae</taxon>
        <taxon>Picovirinae</taxon>
        <taxon>Salasvirus</taxon>
        <taxon>Salasvirus phi29</taxon>
    </lineage>
</organism>
<protein>
    <recommendedName>
        <fullName>Gene product 16.8</fullName>
        <shortName>gp16.8</shortName>
    </recommendedName>
    <alternativeName>
        <fullName>Protein p16.8</fullName>
    </alternativeName>
</protein>
<gene>
    <name type="primary">16.8</name>
</gene>
<comment type="similarity">
    <text evidence="1">Belongs to the phi29likevirus gp16.8 family.</text>
</comment>
<evidence type="ECO:0000305" key="1"/>
<proteinExistence type="inferred from homology"/>
<accession>P16518</accession>
<accession>B3VMQ5</accession>
<dbReference type="EMBL" id="M14430">
    <property type="protein sequence ID" value="AAA88351.1"/>
    <property type="molecule type" value="Genomic_DNA"/>
</dbReference>
<dbReference type="EMBL" id="EU771092">
    <property type="protein sequence ID" value="ACE96042.1"/>
    <property type="molecule type" value="Genomic_DNA"/>
</dbReference>
<dbReference type="PIR" id="JN0032">
    <property type="entry name" value="JN0032"/>
</dbReference>
<dbReference type="RefSeq" id="YP_002004548.1">
    <property type="nucleotide sequence ID" value="NC_011048.1"/>
</dbReference>
<dbReference type="GeneID" id="6446502"/>
<dbReference type="KEGG" id="vg:6446502"/>
<dbReference type="Proteomes" id="UP000001207">
    <property type="component" value="Genome"/>
</dbReference>
<feature type="chain" id="PRO_0000106616" description="Gene product 16.8">
    <location>
        <begin position="1"/>
        <end position="105"/>
    </location>
</feature>
<sequence length="105" mass="12405">MIDIIVKEDKRLITVQTPEGDEVFYTLSFSDGHKILKRSSARLRNNIYAIGVANIRWMLVDMDNMILSEYIHHVDILKDIDRKMREMGYIVISEWQHANKKGTRR</sequence>
<keyword id="KW-0244">Early protein</keyword>
<keyword id="KW-1185">Reference proteome</keyword>
<name>GP168_BPPH2</name>
<organismHost>
    <name type="scientific">Bacillus subtilis</name>
    <dbReference type="NCBI Taxonomy" id="1423"/>
</organismHost>
<reference key="1">
    <citation type="journal article" date="1985" name="Gene">
        <title>The complete sequence of the Bacillus phage phi 29 right early region.</title>
        <authorList>
            <person name="Garvey K.J."/>
            <person name="Yoshikawa H."/>
            <person name="Ito J."/>
        </authorList>
    </citation>
    <scope>NUCLEOTIDE SEQUENCE [GENOMIC DNA]</scope>
</reference>
<reference key="2">
    <citation type="submission" date="2008-05" db="EMBL/GenBank/DDBJ databases">
        <authorList>
            <person name="Villegas A.P."/>
            <person name="Lingohr E.J."/>
            <person name="Ceyssens P.-J."/>
            <person name="Kropinski A.M."/>
        </authorList>
    </citation>
    <scope>NUCLEOTIDE SEQUENCE [GENOMIC DNA]</scope>
</reference>